<proteinExistence type="predicted"/>
<reference key="1">
    <citation type="journal article" date="1996" name="Science">
        <title>Complete genome sequence of the methanogenic archaeon, Methanococcus jannaschii.</title>
        <authorList>
            <person name="Bult C.J."/>
            <person name="White O."/>
            <person name="Olsen G.J."/>
            <person name="Zhou L."/>
            <person name="Fleischmann R.D."/>
            <person name="Sutton G.G."/>
            <person name="Blake J.A."/>
            <person name="FitzGerald L.M."/>
            <person name="Clayton R.A."/>
            <person name="Gocayne J.D."/>
            <person name="Kerlavage A.R."/>
            <person name="Dougherty B.A."/>
            <person name="Tomb J.-F."/>
            <person name="Adams M.D."/>
            <person name="Reich C.I."/>
            <person name="Overbeek R."/>
            <person name="Kirkness E.F."/>
            <person name="Weinstock K.G."/>
            <person name="Merrick J.M."/>
            <person name="Glodek A."/>
            <person name="Scott J.L."/>
            <person name="Geoghagen N.S.M."/>
            <person name="Weidman J.F."/>
            <person name="Fuhrmann J.L."/>
            <person name="Nguyen D."/>
            <person name="Utterback T.R."/>
            <person name="Kelley J.M."/>
            <person name="Peterson J.D."/>
            <person name="Sadow P.W."/>
            <person name="Hanna M.C."/>
            <person name="Cotton M.D."/>
            <person name="Roberts K.M."/>
            <person name="Hurst M.A."/>
            <person name="Kaine B.P."/>
            <person name="Borodovsky M."/>
            <person name="Klenk H.-P."/>
            <person name="Fraser C.M."/>
            <person name="Smith H.O."/>
            <person name="Woese C.R."/>
            <person name="Venter J.C."/>
        </authorList>
    </citation>
    <scope>NUCLEOTIDE SEQUENCE [LARGE SCALE GENOMIC DNA]</scope>
    <source>
        <strain>ATCC 43067 / DSM 2661 / JAL-1 / JCM 10045 / NBRC 100440</strain>
    </source>
</reference>
<feature type="chain" id="PRO_0000107444" description="Uncharacterized protein MJ1623">
    <location>
        <begin position="1"/>
        <end position="512"/>
    </location>
</feature>
<organism>
    <name type="scientific">Methanocaldococcus jannaschii (strain ATCC 43067 / DSM 2661 / JAL-1 / JCM 10045 / NBRC 100440)</name>
    <name type="common">Methanococcus jannaschii</name>
    <dbReference type="NCBI Taxonomy" id="243232"/>
    <lineage>
        <taxon>Archaea</taxon>
        <taxon>Methanobacteriati</taxon>
        <taxon>Methanobacteriota</taxon>
        <taxon>Methanomada group</taxon>
        <taxon>Methanococci</taxon>
        <taxon>Methanococcales</taxon>
        <taxon>Methanocaldococcaceae</taxon>
        <taxon>Methanocaldococcus</taxon>
    </lineage>
</organism>
<protein>
    <recommendedName>
        <fullName>Uncharacterized protein MJ1623</fullName>
    </recommendedName>
</protein>
<dbReference type="EMBL" id="L77117">
    <property type="protein sequence ID" value="AAB99648.1"/>
    <property type="molecule type" value="Genomic_DNA"/>
</dbReference>
<dbReference type="PIR" id="E64502">
    <property type="entry name" value="E64502"/>
</dbReference>
<dbReference type="RefSeq" id="WP_010871147.1">
    <property type="nucleotide sequence ID" value="NC_000909.1"/>
</dbReference>
<dbReference type="SMR" id="Q59017"/>
<dbReference type="STRING" id="243232.MJ_1623"/>
<dbReference type="PaxDb" id="243232-MJ_1623"/>
<dbReference type="EnsemblBacteria" id="AAB99648">
    <property type="protein sequence ID" value="AAB99648"/>
    <property type="gene ID" value="MJ_1623"/>
</dbReference>
<dbReference type="GeneID" id="1452532"/>
<dbReference type="KEGG" id="mja:MJ_1623"/>
<dbReference type="eggNOG" id="arCOG02037">
    <property type="taxonomic scope" value="Archaea"/>
</dbReference>
<dbReference type="eggNOG" id="arCOG02838">
    <property type="taxonomic scope" value="Archaea"/>
</dbReference>
<dbReference type="HOGENOM" id="CLU_523401_0_0_2"/>
<dbReference type="InParanoid" id="Q59017"/>
<dbReference type="OrthoDB" id="140075at2157"/>
<dbReference type="PhylomeDB" id="Q59017"/>
<dbReference type="Proteomes" id="UP000000805">
    <property type="component" value="Chromosome"/>
</dbReference>
<dbReference type="CDD" id="cd00090">
    <property type="entry name" value="HTH_ARSR"/>
    <property type="match status" value="1"/>
</dbReference>
<dbReference type="Gene3D" id="1.10.10.10">
    <property type="entry name" value="Winged helix-like DNA-binding domain superfamily/Winged helix DNA-binding domain"/>
    <property type="match status" value="1"/>
</dbReference>
<dbReference type="InterPro" id="IPR011991">
    <property type="entry name" value="ArsR-like_HTH"/>
</dbReference>
<dbReference type="InterPro" id="IPR019494">
    <property type="entry name" value="FIST_C"/>
</dbReference>
<dbReference type="InterPro" id="IPR013702">
    <property type="entry name" value="FIST_domain_N"/>
</dbReference>
<dbReference type="InterPro" id="IPR002831">
    <property type="entry name" value="Tscrpt_reg_TrmB_N"/>
</dbReference>
<dbReference type="InterPro" id="IPR036388">
    <property type="entry name" value="WH-like_DNA-bd_sf"/>
</dbReference>
<dbReference type="InterPro" id="IPR036390">
    <property type="entry name" value="WH_DNA-bd_sf"/>
</dbReference>
<dbReference type="PANTHER" id="PTHR40252">
    <property type="entry name" value="BLR0328 PROTEIN"/>
    <property type="match status" value="1"/>
</dbReference>
<dbReference type="PANTHER" id="PTHR40252:SF2">
    <property type="entry name" value="BLR0328 PROTEIN"/>
    <property type="match status" value="1"/>
</dbReference>
<dbReference type="Pfam" id="PF08495">
    <property type="entry name" value="FIST"/>
    <property type="match status" value="1"/>
</dbReference>
<dbReference type="Pfam" id="PF10442">
    <property type="entry name" value="FIST_C"/>
    <property type="match status" value="1"/>
</dbReference>
<dbReference type="Pfam" id="PF01978">
    <property type="entry name" value="TrmB"/>
    <property type="match status" value="1"/>
</dbReference>
<dbReference type="SMART" id="SM00897">
    <property type="entry name" value="FIST"/>
    <property type="match status" value="1"/>
</dbReference>
<dbReference type="SMART" id="SM01204">
    <property type="entry name" value="FIST_C"/>
    <property type="match status" value="1"/>
</dbReference>
<dbReference type="SUPFAM" id="SSF46785">
    <property type="entry name" value="Winged helix' DNA-binding domain"/>
    <property type="match status" value="1"/>
</dbReference>
<accession>Q59017</accession>
<gene>
    <name type="ordered locus">MJ1623</name>
</gene>
<keyword id="KW-1185">Reference proteome</keyword>
<sequence length="512" mass="59701">MIYIHKKIKNPIKDGIEIGEEIKRNVGRASLIIFITSILERDKLKQVFDGMKQHIPLDNLIGCSTGGTFSGKDYIKEDGVLILAFDEYYKSAISCEKVDREAEYVGKKIADKIKTCIRDKYPKLDIDDNFLGFVFFDWNVDSEQEILDVLGRELTIPIIGGTAADDGSFDKFFQIYKGEVVKDCCVFGVVGGKLKFDLIYGHGYEPTDIYARVTKAEGKVVYELDGKPAYQRYLEMLSEYTKLPMDIIKKYFYRDLRRLDFYLVHPLGFMDINGNYITAFLERVEENTLVFRRDILEGSFLVLMKTDIEKQVKSIVDELKKAEDFENPLIFINECYGREVLKNSMFREFEEDILKYFLNFYKAGKKVEEYVIEDNCIGWLSYGETIAKDLIRFHNNLSFTGVIFELSQSSNINWREELKNFNFEDDEIEVIVNLINKQLTAKELLQLTNLSQTKLYHILNKLEKEGIIKSVSGKPKLYYIDNIKEILQKTHEKIEHENMVKKIKRKKLLRLL</sequence>
<name>Y1623_METJA</name>